<proteinExistence type="predicted"/>
<keyword id="KW-0472">Membrane</keyword>
<keyword id="KW-1185">Reference proteome</keyword>
<keyword id="KW-0812">Transmembrane</keyword>
<keyword id="KW-1133">Transmembrane helix</keyword>
<feature type="chain" id="PRO_0000310838" description="Uncharacterized protein C23A1.02c">
    <location>
        <begin position="1"/>
        <end position="430"/>
    </location>
</feature>
<feature type="transmembrane region" description="Helical" evidence="1">
    <location>
        <begin position="20"/>
        <end position="40"/>
    </location>
</feature>
<feature type="transmembrane region" description="Helical" evidence="1">
    <location>
        <begin position="405"/>
        <end position="425"/>
    </location>
</feature>
<name>YFH2_SCHPO</name>
<dbReference type="EMBL" id="CU329670">
    <property type="protein sequence ID" value="CAA16976.2"/>
    <property type="molecule type" value="Genomic_DNA"/>
</dbReference>
<dbReference type="PIR" id="T38222">
    <property type="entry name" value="T38222"/>
</dbReference>
<dbReference type="BioGRID" id="278238">
    <property type="interactions" value="27"/>
</dbReference>
<dbReference type="FunCoup" id="O42841">
    <property type="interactions" value="236"/>
</dbReference>
<dbReference type="IntAct" id="O42841">
    <property type="interactions" value="1"/>
</dbReference>
<dbReference type="STRING" id="284812.O42841"/>
<dbReference type="iPTMnet" id="O42841"/>
<dbReference type="PaxDb" id="4896-SPAC23A1.02c.1"/>
<dbReference type="EnsemblFungi" id="SPAC23A1.02c.1">
    <property type="protein sequence ID" value="SPAC23A1.02c.1:pep"/>
    <property type="gene ID" value="SPAC23A1.02c"/>
</dbReference>
<dbReference type="KEGG" id="spo:2541744"/>
<dbReference type="PomBase" id="SPAC23A1.02c"/>
<dbReference type="VEuPathDB" id="FungiDB:SPAC23A1.02c"/>
<dbReference type="eggNOG" id="KOG3662">
    <property type="taxonomic scope" value="Eukaryota"/>
</dbReference>
<dbReference type="HOGENOM" id="CLU_638029_0_0_1"/>
<dbReference type="InParanoid" id="O42841"/>
<dbReference type="OMA" id="PQIEGNH"/>
<dbReference type="PhylomeDB" id="O42841"/>
<dbReference type="PRO" id="PR:O42841"/>
<dbReference type="Proteomes" id="UP000002485">
    <property type="component" value="Chromosome I"/>
</dbReference>
<dbReference type="GO" id="GO:0005783">
    <property type="term" value="C:endoplasmic reticulum"/>
    <property type="evidence" value="ECO:0000318"/>
    <property type="project" value="GO_Central"/>
</dbReference>
<dbReference type="GO" id="GO:0005789">
    <property type="term" value="C:endoplasmic reticulum membrane"/>
    <property type="evidence" value="ECO:0000305"/>
    <property type="project" value="PomBase"/>
</dbReference>
<dbReference type="GO" id="GO:0062050">
    <property type="term" value="F:GPI-mannose ethanolamine phosphate phosphodiesterase activity"/>
    <property type="evidence" value="ECO:0000250"/>
    <property type="project" value="PomBase"/>
</dbReference>
<dbReference type="GO" id="GO:0006506">
    <property type="term" value="P:GPI anchor biosynthetic process"/>
    <property type="evidence" value="ECO:0000318"/>
    <property type="project" value="GO_Central"/>
</dbReference>
<dbReference type="CDD" id="cd08164">
    <property type="entry name" value="MPP_Ted1"/>
    <property type="match status" value="1"/>
</dbReference>
<dbReference type="Gene3D" id="3.60.21.10">
    <property type="match status" value="1"/>
</dbReference>
<dbReference type="InterPro" id="IPR004843">
    <property type="entry name" value="Calcineurin-like_PHP_ApaH"/>
</dbReference>
<dbReference type="InterPro" id="IPR029052">
    <property type="entry name" value="Metallo-depent_PP-like"/>
</dbReference>
<dbReference type="InterPro" id="IPR033308">
    <property type="entry name" value="PGAP5/Cdc1/Ted1"/>
</dbReference>
<dbReference type="InterPro" id="IPR033307">
    <property type="entry name" value="Ted1_MPase_dom"/>
</dbReference>
<dbReference type="PANTHER" id="PTHR13315">
    <property type="entry name" value="METALLO PHOSPHOESTERASE RELATED"/>
    <property type="match status" value="1"/>
</dbReference>
<dbReference type="PANTHER" id="PTHR13315:SF1">
    <property type="entry name" value="PROTEIN TED1"/>
    <property type="match status" value="1"/>
</dbReference>
<dbReference type="Pfam" id="PF00149">
    <property type="entry name" value="Metallophos"/>
    <property type="match status" value="1"/>
</dbReference>
<dbReference type="SUPFAM" id="SSF56300">
    <property type="entry name" value="Metallo-dependent phosphatases"/>
    <property type="match status" value="1"/>
</dbReference>
<reference key="1">
    <citation type="journal article" date="2002" name="Nature">
        <title>The genome sequence of Schizosaccharomyces pombe.</title>
        <authorList>
            <person name="Wood V."/>
            <person name="Gwilliam R."/>
            <person name="Rajandream M.A."/>
            <person name="Lyne M.H."/>
            <person name="Lyne R."/>
            <person name="Stewart A."/>
            <person name="Sgouros J.G."/>
            <person name="Peat N."/>
            <person name="Hayles J."/>
            <person name="Baker S.G."/>
            <person name="Basham D."/>
            <person name="Bowman S."/>
            <person name="Brooks K."/>
            <person name="Brown D."/>
            <person name="Brown S."/>
            <person name="Chillingworth T."/>
            <person name="Churcher C.M."/>
            <person name="Collins M."/>
            <person name="Connor R."/>
            <person name="Cronin A."/>
            <person name="Davis P."/>
            <person name="Feltwell T."/>
            <person name="Fraser A."/>
            <person name="Gentles S."/>
            <person name="Goble A."/>
            <person name="Hamlin N."/>
            <person name="Harris D.E."/>
            <person name="Hidalgo J."/>
            <person name="Hodgson G."/>
            <person name="Holroyd S."/>
            <person name="Hornsby T."/>
            <person name="Howarth S."/>
            <person name="Huckle E.J."/>
            <person name="Hunt S."/>
            <person name="Jagels K."/>
            <person name="James K.D."/>
            <person name="Jones L."/>
            <person name="Jones M."/>
            <person name="Leather S."/>
            <person name="McDonald S."/>
            <person name="McLean J."/>
            <person name="Mooney P."/>
            <person name="Moule S."/>
            <person name="Mungall K.L."/>
            <person name="Murphy L.D."/>
            <person name="Niblett D."/>
            <person name="Odell C."/>
            <person name="Oliver K."/>
            <person name="O'Neil S."/>
            <person name="Pearson D."/>
            <person name="Quail M.A."/>
            <person name="Rabbinowitsch E."/>
            <person name="Rutherford K.M."/>
            <person name="Rutter S."/>
            <person name="Saunders D."/>
            <person name="Seeger K."/>
            <person name="Sharp S."/>
            <person name="Skelton J."/>
            <person name="Simmonds M.N."/>
            <person name="Squares R."/>
            <person name="Squares S."/>
            <person name="Stevens K."/>
            <person name="Taylor K."/>
            <person name="Taylor R.G."/>
            <person name="Tivey A."/>
            <person name="Walsh S.V."/>
            <person name="Warren T."/>
            <person name="Whitehead S."/>
            <person name="Woodward J.R."/>
            <person name="Volckaert G."/>
            <person name="Aert R."/>
            <person name="Robben J."/>
            <person name="Grymonprez B."/>
            <person name="Weltjens I."/>
            <person name="Vanstreels E."/>
            <person name="Rieger M."/>
            <person name="Schaefer M."/>
            <person name="Mueller-Auer S."/>
            <person name="Gabel C."/>
            <person name="Fuchs M."/>
            <person name="Duesterhoeft A."/>
            <person name="Fritzc C."/>
            <person name="Holzer E."/>
            <person name="Moestl D."/>
            <person name="Hilbert H."/>
            <person name="Borzym K."/>
            <person name="Langer I."/>
            <person name="Beck A."/>
            <person name="Lehrach H."/>
            <person name="Reinhardt R."/>
            <person name="Pohl T.M."/>
            <person name="Eger P."/>
            <person name="Zimmermann W."/>
            <person name="Wedler H."/>
            <person name="Wambutt R."/>
            <person name="Purnelle B."/>
            <person name="Goffeau A."/>
            <person name="Cadieu E."/>
            <person name="Dreano S."/>
            <person name="Gloux S."/>
            <person name="Lelaure V."/>
            <person name="Mottier S."/>
            <person name="Galibert F."/>
            <person name="Aves S.J."/>
            <person name="Xiang Z."/>
            <person name="Hunt C."/>
            <person name="Moore K."/>
            <person name="Hurst S.M."/>
            <person name="Lucas M."/>
            <person name="Rochet M."/>
            <person name="Gaillardin C."/>
            <person name="Tallada V.A."/>
            <person name="Garzon A."/>
            <person name="Thode G."/>
            <person name="Daga R.R."/>
            <person name="Cruzado L."/>
            <person name="Jimenez J."/>
            <person name="Sanchez M."/>
            <person name="del Rey F."/>
            <person name="Benito J."/>
            <person name="Dominguez A."/>
            <person name="Revuelta J.L."/>
            <person name="Moreno S."/>
            <person name="Armstrong J."/>
            <person name="Forsburg S.L."/>
            <person name="Cerutti L."/>
            <person name="Lowe T."/>
            <person name="McCombie W.R."/>
            <person name="Paulsen I."/>
            <person name="Potashkin J."/>
            <person name="Shpakovski G.V."/>
            <person name="Ussery D."/>
            <person name="Barrell B.G."/>
            <person name="Nurse P."/>
        </authorList>
    </citation>
    <scope>NUCLEOTIDE SEQUENCE [LARGE SCALE GENOMIC DNA]</scope>
    <source>
        <strain>972 / ATCC 24843</strain>
    </source>
</reference>
<evidence type="ECO:0000255" key="1"/>
<evidence type="ECO:0000305" key="2"/>
<accession>O42841</accession>
<organism>
    <name type="scientific">Schizosaccharomyces pombe (strain 972 / ATCC 24843)</name>
    <name type="common">Fission yeast</name>
    <dbReference type="NCBI Taxonomy" id="284812"/>
    <lineage>
        <taxon>Eukaryota</taxon>
        <taxon>Fungi</taxon>
        <taxon>Dikarya</taxon>
        <taxon>Ascomycota</taxon>
        <taxon>Taphrinomycotina</taxon>
        <taxon>Schizosaccharomycetes</taxon>
        <taxon>Schizosaccharomycetales</taxon>
        <taxon>Schizosaccharomycetaceae</taxon>
        <taxon>Schizosaccharomyces</taxon>
    </lineage>
</organism>
<sequence length="430" mass="48665">MFARHPNLLWLNKQLSILHYLCLVFLAVYYAYPLLFGIMPRKLQLEDENSFVIMGVADPQIEGNHKIEANGFFKGTLDLWGNDLFLRHLVHMNQFWGQPDAMILLGDLVSFQHLDNEEFNKRAKRLKKITGAKNFWQVGNSSLPARTFENGNIPVWTIAGNHDIGYGCESSDAQISKWEQAMGPVNWVSHFNVSKFPVRVIGINSLSLDDVQFYDANPSDIINSKSFSSLGILALSKEARDAWQFLFDIALEPSIPTILFTHVPLYKPANVCVDEPRIVRQLDFRVKSQNHLSYNTTMKIFELIPSIKLVLSGHDHMGCDYEHPNGAIEHTLPSAMGYFGGNIGFVKLIATNDVLTESSKNTPSVVTFLIQKLIGQRWKKASLKQSKFSSDIYATYTLSHGGPSYIWWALHISVCVLTILRLLVISLQHI</sequence>
<gene>
    <name type="ORF">SPAC23A1.02c</name>
</gene>
<protein>
    <recommendedName>
        <fullName>Uncharacterized protein C23A1.02c</fullName>
    </recommendedName>
</protein>
<comment type="subcellular location">
    <subcellularLocation>
        <location evidence="2">Membrane</location>
        <topology evidence="2">Multi-pass membrane protein</topology>
    </subcellularLocation>
</comment>